<comment type="function">
    <text evidence="1">Catalyzes the ATP-dependent phosphorylation of N-acetyl-L-glutamate.</text>
</comment>
<comment type="catalytic activity">
    <reaction evidence="1">
        <text>N-acetyl-L-glutamate + ATP = N-acetyl-L-glutamyl 5-phosphate + ADP</text>
        <dbReference type="Rhea" id="RHEA:14629"/>
        <dbReference type="ChEBI" id="CHEBI:30616"/>
        <dbReference type="ChEBI" id="CHEBI:44337"/>
        <dbReference type="ChEBI" id="CHEBI:57936"/>
        <dbReference type="ChEBI" id="CHEBI:456216"/>
        <dbReference type="EC" id="2.7.2.8"/>
    </reaction>
</comment>
<comment type="pathway">
    <text evidence="1">Amino-acid biosynthesis; L-arginine biosynthesis; N(2)-acetyl-L-ornithine from L-glutamate: step 2/4.</text>
</comment>
<comment type="subcellular location">
    <subcellularLocation>
        <location evidence="1">Cytoplasm</location>
    </subcellularLocation>
</comment>
<comment type="similarity">
    <text evidence="1">Belongs to the acetylglutamate kinase family. ArgB subfamily.</text>
</comment>
<name>ARGB_CHLL2</name>
<organism>
    <name type="scientific">Chlorobium limicola (strain DSM 245 / NBRC 103803 / 6330)</name>
    <dbReference type="NCBI Taxonomy" id="290315"/>
    <lineage>
        <taxon>Bacteria</taxon>
        <taxon>Pseudomonadati</taxon>
        <taxon>Chlorobiota</taxon>
        <taxon>Chlorobiia</taxon>
        <taxon>Chlorobiales</taxon>
        <taxon>Chlorobiaceae</taxon>
        <taxon>Chlorobium/Pelodictyon group</taxon>
        <taxon>Chlorobium</taxon>
    </lineage>
</organism>
<proteinExistence type="inferred from homology"/>
<keyword id="KW-0028">Amino-acid biosynthesis</keyword>
<keyword id="KW-0055">Arginine biosynthesis</keyword>
<keyword id="KW-0067">ATP-binding</keyword>
<keyword id="KW-0963">Cytoplasm</keyword>
<keyword id="KW-0418">Kinase</keyword>
<keyword id="KW-0547">Nucleotide-binding</keyword>
<keyword id="KW-0808">Transferase</keyword>
<feature type="chain" id="PRO_1000117121" description="Acetylglutamate kinase">
    <location>
        <begin position="1"/>
        <end position="304"/>
    </location>
</feature>
<feature type="binding site" evidence="1">
    <location>
        <begin position="77"/>
        <end position="78"/>
    </location>
    <ligand>
        <name>substrate</name>
    </ligand>
</feature>
<feature type="binding site" evidence="1">
    <location>
        <position position="99"/>
    </location>
    <ligand>
        <name>substrate</name>
    </ligand>
</feature>
<feature type="binding site" evidence="1">
    <location>
        <position position="193"/>
    </location>
    <ligand>
        <name>substrate</name>
    </ligand>
</feature>
<feature type="site" description="Transition state stabilizer" evidence="1">
    <location>
        <position position="42"/>
    </location>
</feature>
<feature type="site" description="Transition state stabilizer" evidence="1">
    <location>
        <position position="252"/>
    </location>
</feature>
<dbReference type="EC" id="2.7.2.8" evidence="1"/>
<dbReference type="EMBL" id="CP001097">
    <property type="protein sequence ID" value="ACD90314.1"/>
    <property type="molecule type" value="Genomic_DNA"/>
</dbReference>
<dbReference type="RefSeq" id="WP_012466191.1">
    <property type="nucleotide sequence ID" value="NC_010803.1"/>
</dbReference>
<dbReference type="SMR" id="B3ECN9"/>
<dbReference type="STRING" id="290315.Clim_1247"/>
<dbReference type="KEGG" id="cli:Clim_1247"/>
<dbReference type="eggNOG" id="COG0548">
    <property type="taxonomic scope" value="Bacteria"/>
</dbReference>
<dbReference type="HOGENOM" id="CLU_053680_0_0_10"/>
<dbReference type="OrthoDB" id="9803155at2"/>
<dbReference type="UniPathway" id="UPA00068">
    <property type="reaction ID" value="UER00107"/>
</dbReference>
<dbReference type="Proteomes" id="UP000008841">
    <property type="component" value="Chromosome"/>
</dbReference>
<dbReference type="GO" id="GO:0005737">
    <property type="term" value="C:cytoplasm"/>
    <property type="evidence" value="ECO:0007669"/>
    <property type="project" value="UniProtKB-SubCell"/>
</dbReference>
<dbReference type="GO" id="GO:0003991">
    <property type="term" value="F:acetylglutamate kinase activity"/>
    <property type="evidence" value="ECO:0007669"/>
    <property type="project" value="UniProtKB-UniRule"/>
</dbReference>
<dbReference type="GO" id="GO:0005524">
    <property type="term" value="F:ATP binding"/>
    <property type="evidence" value="ECO:0007669"/>
    <property type="project" value="UniProtKB-UniRule"/>
</dbReference>
<dbReference type="GO" id="GO:0042450">
    <property type="term" value="P:arginine biosynthetic process via ornithine"/>
    <property type="evidence" value="ECO:0007669"/>
    <property type="project" value="UniProtKB-UniRule"/>
</dbReference>
<dbReference type="GO" id="GO:0006526">
    <property type="term" value="P:L-arginine biosynthetic process"/>
    <property type="evidence" value="ECO:0007669"/>
    <property type="project" value="UniProtKB-UniPathway"/>
</dbReference>
<dbReference type="CDD" id="cd04250">
    <property type="entry name" value="AAK_NAGK-C"/>
    <property type="match status" value="1"/>
</dbReference>
<dbReference type="FunFam" id="3.40.1160.10:FF:000004">
    <property type="entry name" value="Acetylglutamate kinase"/>
    <property type="match status" value="1"/>
</dbReference>
<dbReference type="Gene3D" id="3.40.1160.10">
    <property type="entry name" value="Acetylglutamate kinase-like"/>
    <property type="match status" value="1"/>
</dbReference>
<dbReference type="HAMAP" id="MF_00082">
    <property type="entry name" value="ArgB"/>
    <property type="match status" value="1"/>
</dbReference>
<dbReference type="InterPro" id="IPR036393">
    <property type="entry name" value="AceGlu_kinase-like_sf"/>
</dbReference>
<dbReference type="InterPro" id="IPR004662">
    <property type="entry name" value="AcgluKinase_fam"/>
</dbReference>
<dbReference type="InterPro" id="IPR037528">
    <property type="entry name" value="ArgB"/>
</dbReference>
<dbReference type="InterPro" id="IPR001048">
    <property type="entry name" value="Asp/Glu/Uridylate_kinase"/>
</dbReference>
<dbReference type="InterPro" id="IPR041727">
    <property type="entry name" value="NAGK-C"/>
</dbReference>
<dbReference type="NCBIfam" id="TIGR00761">
    <property type="entry name" value="argB"/>
    <property type="match status" value="1"/>
</dbReference>
<dbReference type="PANTHER" id="PTHR23342">
    <property type="entry name" value="N-ACETYLGLUTAMATE SYNTHASE"/>
    <property type="match status" value="1"/>
</dbReference>
<dbReference type="PANTHER" id="PTHR23342:SF0">
    <property type="entry name" value="N-ACETYLGLUTAMATE SYNTHASE, MITOCHONDRIAL"/>
    <property type="match status" value="1"/>
</dbReference>
<dbReference type="Pfam" id="PF00696">
    <property type="entry name" value="AA_kinase"/>
    <property type="match status" value="1"/>
</dbReference>
<dbReference type="PIRSF" id="PIRSF000728">
    <property type="entry name" value="NAGK"/>
    <property type="match status" value="1"/>
</dbReference>
<dbReference type="SUPFAM" id="SSF53633">
    <property type="entry name" value="Carbamate kinase-like"/>
    <property type="match status" value="1"/>
</dbReference>
<protein>
    <recommendedName>
        <fullName evidence="1">Acetylglutamate kinase</fullName>
        <ecNumber evidence="1">2.7.2.8</ecNumber>
    </recommendedName>
    <alternativeName>
        <fullName evidence="1">N-acetyl-L-glutamate 5-phosphotransferase</fullName>
    </alternativeName>
    <alternativeName>
        <fullName evidence="1">NAG kinase</fullName>
        <shortName evidence="1">NAGK</shortName>
    </alternativeName>
</protein>
<reference key="1">
    <citation type="submission" date="2008-05" db="EMBL/GenBank/DDBJ databases">
        <title>Complete sequence of Chlorobium limicola DSM 245.</title>
        <authorList>
            <consortium name="US DOE Joint Genome Institute"/>
            <person name="Lucas S."/>
            <person name="Copeland A."/>
            <person name="Lapidus A."/>
            <person name="Glavina del Rio T."/>
            <person name="Dalin E."/>
            <person name="Tice H."/>
            <person name="Bruce D."/>
            <person name="Goodwin L."/>
            <person name="Pitluck S."/>
            <person name="Schmutz J."/>
            <person name="Larimer F."/>
            <person name="Land M."/>
            <person name="Hauser L."/>
            <person name="Kyrpides N."/>
            <person name="Ovchinnikova G."/>
            <person name="Zhao F."/>
            <person name="Li T."/>
            <person name="Liu Z."/>
            <person name="Overmann J."/>
            <person name="Bryant D.A."/>
            <person name="Richardson P."/>
        </authorList>
    </citation>
    <scope>NUCLEOTIDE SEQUENCE [LARGE SCALE GENOMIC DNA]</scope>
    <source>
        <strain>DSM 245 / NBRC 103803 / 6330</strain>
    </source>
</reference>
<evidence type="ECO:0000255" key="1">
    <source>
        <dbReference type="HAMAP-Rule" id="MF_00082"/>
    </source>
</evidence>
<accession>B3ECN9</accession>
<sequence>MNPLCSEFTSSSRKAPEAAIGQVLIEALPYIRKFEGKTFVIKYGGSAMKDELLKNSFAQNVTLLRKVGINVVLVHGGGDAITRTAEKLGLVSQFVHGKRVTDNDMITVVQMTLAGKVNQDIVRLLSEHGGKAVGVTGLDADTIKAVPGPNAEKLGLVGDVESINTDYIDLLCRAGLIPVIAPVGYDHNGNIYNINADDAASSIAIALKAEKLIYVSDVEGIQVGERILKTICKAEAADFIEQGIISGGMIPKVLSAFKTLDGGVRKIHLIDGKFTHSLLLEIFTHEGIGTQFIAEQDNDQQENR</sequence>
<gene>
    <name evidence="1" type="primary">argB</name>
    <name type="ordered locus">Clim_1247</name>
</gene>